<evidence type="ECO:0000250" key="1">
    <source>
        <dbReference type="UniProtKB" id="P24230"/>
    </source>
</evidence>
<evidence type="ECO:0000250" key="2">
    <source>
        <dbReference type="UniProtKB" id="Q9WY48"/>
    </source>
</evidence>
<evidence type="ECO:0000255" key="3">
    <source>
        <dbReference type="PROSITE-ProRule" id="PRU00541"/>
    </source>
</evidence>
<evidence type="ECO:0000255" key="4">
    <source>
        <dbReference type="PROSITE-ProRule" id="PRU00542"/>
    </source>
</evidence>
<evidence type="ECO:0000305" key="5"/>
<accession>Q8CSV3</accession>
<comment type="function">
    <text evidence="1">Plays a critical role in recombination and DNA repair. Helps process Holliday junction intermediates to mature products by catalyzing branch migration. Has replication fork regression activity, unwinds stalled or blocked replication forks to make a HJ that can be resolved. Has a DNA unwinding activity characteristic of a DNA helicase with 3'-5' polarity (By similarity).</text>
</comment>
<comment type="catalytic activity">
    <reaction evidence="1">
        <text>Couples ATP hydrolysis with the unwinding of duplex DNA by translocating in the 3'-5' direction.</text>
        <dbReference type="EC" id="5.6.2.4"/>
    </reaction>
</comment>
<comment type="catalytic activity">
    <reaction evidence="1">
        <text>ATP + H2O = ADP + phosphate + H(+)</text>
        <dbReference type="Rhea" id="RHEA:13065"/>
        <dbReference type="ChEBI" id="CHEBI:15377"/>
        <dbReference type="ChEBI" id="CHEBI:15378"/>
        <dbReference type="ChEBI" id="CHEBI:30616"/>
        <dbReference type="ChEBI" id="CHEBI:43474"/>
        <dbReference type="ChEBI" id="CHEBI:456216"/>
        <dbReference type="EC" id="5.6.2.4"/>
    </reaction>
</comment>
<comment type="subunit">
    <text evidence="2">Monomer (By similarity).</text>
</comment>
<comment type="domain">
    <text evidence="2">The wedge domain within the N-terminus inserts into the replication fork junction, where the lagging and leading strand split (By similarity).</text>
</comment>
<comment type="similarity">
    <text evidence="5">Belongs to the helicase family. RecG subfamily.</text>
</comment>
<organism>
    <name type="scientific">Staphylococcus epidermidis (strain ATCC 12228 / FDA PCI 1200)</name>
    <dbReference type="NCBI Taxonomy" id="176280"/>
    <lineage>
        <taxon>Bacteria</taxon>
        <taxon>Bacillati</taxon>
        <taxon>Bacillota</taxon>
        <taxon>Bacilli</taxon>
        <taxon>Bacillales</taxon>
        <taxon>Staphylococcaceae</taxon>
        <taxon>Staphylococcus</taxon>
    </lineage>
</organism>
<feature type="chain" id="PRO_0000102156" description="ATP-dependent DNA helicase RecG">
    <location>
        <begin position="1"/>
        <end position="682"/>
    </location>
</feature>
<feature type="domain" description="Helicase ATP-binding" evidence="3">
    <location>
        <begin position="275"/>
        <end position="435"/>
    </location>
</feature>
<feature type="domain" description="Helicase C-terminal" evidence="4">
    <location>
        <begin position="454"/>
        <end position="614"/>
    </location>
</feature>
<feature type="region of interest" description="Wedge domain" evidence="2">
    <location>
        <begin position="50"/>
        <end position="145"/>
    </location>
</feature>
<feature type="short sequence motif" description="DEAH box" evidence="3">
    <location>
        <begin position="388"/>
        <end position="391"/>
    </location>
</feature>
<feature type="binding site" evidence="3">
    <location>
        <begin position="288"/>
        <end position="295"/>
    </location>
    <ligand>
        <name>ATP</name>
        <dbReference type="ChEBI" id="CHEBI:30616"/>
    </ligand>
</feature>
<protein>
    <recommendedName>
        <fullName>ATP-dependent DNA helicase RecG</fullName>
        <ecNumber evidence="1">5.6.2.4</ecNumber>
    </recommendedName>
    <alternativeName>
        <fullName>DNA branch migration protein RecG</fullName>
    </alternativeName>
    <alternativeName>
        <fullName>Probable DNA 3'-5' helicase RecG</fullName>
    </alternativeName>
</protein>
<keyword id="KW-0067">ATP-binding</keyword>
<keyword id="KW-0227">DNA damage</keyword>
<keyword id="KW-0233">DNA recombination</keyword>
<keyword id="KW-0234">DNA repair</keyword>
<keyword id="KW-0238">DNA-binding</keyword>
<keyword id="KW-0347">Helicase</keyword>
<keyword id="KW-0378">Hydrolase</keyword>
<keyword id="KW-0413">Isomerase</keyword>
<keyword id="KW-0547">Nucleotide-binding</keyword>
<sequence length="682" mass="78086">MSKVHLIESPYALDKIKGIGPKRLALLEELNIKSVEDLVLYLPTRYEDNTVIDLNQADDQATVTVQGEVYSSPTVAFFGRNKSKLTVHLMINHIAVKCVFFNQPYLKKKLELNSIVTIKGKWNRNKQEINGNRIFFKDQKNQEDTHLEPIYRIKEGIKQKQLRDNIRQALSDVTIHEWLTDDLREKYKLETLAYTIQTLHHPINKQNLLRARRTYAFTELFMFELRMQWLNRLEKTSDEAIEINYDINKVKQFIDSLPFELTDAQKVSVNEIFRDLKAPIRMHRLLQGDVGSGKTVVAAICMYALKTAGYQSALMVPTEILAEQHAESLIQLFGNTMNVALLTGSVKGKKRRLLLEQLENGTIDCLIGTHALIQDDVVFNNVGLVITDEQHRFGVNQRQILREKGAMTNVLFMTATPIPRTLAISVFGEMDVSSIKQLPKGRKPIKTSWAKHEQYDQVLAQMSNELKKGRQAYVICPLIESSEHLEDVQNVVALYESLQSDYGNEKVGLLHGKMSAEDKDQVMQKFSKHEIDILVSTTVVEVGVNVPNATFMMIYDADRFGLSTLHQLRGRVGRSEHQSYCVLIASPKTETGIERMTIMTQTTDGFELSERDLEMRGPGDFFGVKQSGLPDFLVANVVEDYRMLEVARDEAAELIQSGQFFEQQYSHLREFIKQNLRHIRFD</sequence>
<proteinExistence type="inferred from homology"/>
<name>RECG_STAES</name>
<gene>
    <name type="primary">recG</name>
    <name type="ordered locus">SE_0902</name>
</gene>
<dbReference type="EC" id="5.6.2.4" evidence="1"/>
<dbReference type="EMBL" id="AE015929">
    <property type="protein sequence ID" value="AAO04499.1"/>
    <property type="molecule type" value="Genomic_DNA"/>
</dbReference>
<dbReference type="RefSeq" id="NP_764457.1">
    <property type="nucleotide sequence ID" value="NC_004461.1"/>
</dbReference>
<dbReference type="RefSeq" id="WP_001830069.1">
    <property type="nucleotide sequence ID" value="NZ_WBME01000001.1"/>
</dbReference>
<dbReference type="SMR" id="Q8CSV3"/>
<dbReference type="GeneID" id="50018960"/>
<dbReference type="KEGG" id="sep:SE_0902"/>
<dbReference type="PATRIC" id="fig|176280.10.peg.875"/>
<dbReference type="eggNOG" id="COG1200">
    <property type="taxonomic scope" value="Bacteria"/>
</dbReference>
<dbReference type="HOGENOM" id="CLU_005122_7_1_9"/>
<dbReference type="OrthoDB" id="9804325at2"/>
<dbReference type="Proteomes" id="UP000001411">
    <property type="component" value="Chromosome"/>
</dbReference>
<dbReference type="GO" id="GO:0005524">
    <property type="term" value="F:ATP binding"/>
    <property type="evidence" value="ECO:0007669"/>
    <property type="project" value="UniProtKB-KW"/>
</dbReference>
<dbReference type="GO" id="GO:0016887">
    <property type="term" value="F:ATP hydrolysis activity"/>
    <property type="evidence" value="ECO:0007669"/>
    <property type="project" value="RHEA"/>
</dbReference>
<dbReference type="GO" id="GO:0003677">
    <property type="term" value="F:DNA binding"/>
    <property type="evidence" value="ECO:0007669"/>
    <property type="project" value="UniProtKB-KW"/>
</dbReference>
<dbReference type="GO" id="GO:0003678">
    <property type="term" value="F:DNA helicase activity"/>
    <property type="evidence" value="ECO:0007669"/>
    <property type="project" value="InterPro"/>
</dbReference>
<dbReference type="GO" id="GO:0006310">
    <property type="term" value="P:DNA recombination"/>
    <property type="evidence" value="ECO:0007669"/>
    <property type="project" value="UniProtKB-KW"/>
</dbReference>
<dbReference type="GO" id="GO:0006281">
    <property type="term" value="P:DNA repair"/>
    <property type="evidence" value="ECO:0007669"/>
    <property type="project" value="UniProtKB-KW"/>
</dbReference>
<dbReference type="CDD" id="cd17992">
    <property type="entry name" value="DEXHc_RecG"/>
    <property type="match status" value="1"/>
</dbReference>
<dbReference type="CDD" id="cd04488">
    <property type="entry name" value="RecG_wedge_OBF"/>
    <property type="match status" value="1"/>
</dbReference>
<dbReference type="CDD" id="cd18811">
    <property type="entry name" value="SF2_C_RecG"/>
    <property type="match status" value="1"/>
</dbReference>
<dbReference type="Gene3D" id="2.40.50.140">
    <property type="entry name" value="Nucleic acid-binding proteins"/>
    <property type="match status" value="1"/>
</dbReference>
<dbReference type="Gene3D" id="3.40.50.300">
    <property type="entry name" value="P-loop containing nucleotide triphosphate hydrolases"/>
    <property type="match status" value="2"/>
</dbReference>
<dbReference type="InterPro" id="IPR004609">
    <property type="entry name" value="ATP-dep_DNA_helicase_RecG"/>
</dbReference>
<dbReference type="InterPro" id="IPR011545">
    <property type="entry name" value="DEAD/DEAH_box_helicase_dom"/>
</dbReference>
<dbReference type="InterPro" id="IPR014001">
    <property type="entry name" value="Helicase_ATP-bd"/>
</dbReference>
<dbReference type="InterPro" id="IPR001650">
    <property type="entry name" value="Helicase_C-like"/>
</dbReference>
<dbReference type="InterPro" id="IPR012340">
    <property type="entry name" value="NA-bd_OB-fold"/>
</dbReference>
<dbReference type="InterPro" id="IPR027417">
    <property type="entry name" value="P-loop_NTPase"/>
</dbReference>
<dbReference type="InterPro" id="IPR047112">
    <property type="entry name" value="RecG/Mfd"/>
</dbReference>
<dbReference type="InterPro" id="IPR045562">
    <property type="entry name" value="RecG_dom3_C"/>
</dbReference>
<dbReference type="InterPro" id="IPR033454">
    <property type="entry name" value="RecG_wedge"/>
</dbReference>
<dbReference type="NCBIfam" id="NF008165">
    <property type="entry name" value="PRK10917.1-3"/>
    <property type="match status" value="1"/>
</dbReference>
<dbReference type="NCBIfam" id="NF008168">
    <property type="entry name" value="PRK10917.2-2"/>
    <property type="match status" value="1"/>
</dbReference>
<dbReference type="NCBIfam" id="TIGR00643">
    <property type="entry name" value="recG"/>
    <property type="match status" value="1"/>
</dbReference>
<dbReference type="PANTHER" id="PTHR47964">
    <property type="entry name" value="ATP-DEPENDENT DNA HELICASE HOMOLOG RECG, CHLOROPLASTIC"/>
    <property type="match status" value="1"/>
</dbReference>
<dbReference type="PANTHER" id="PTHR47964:SF1">
    <property type="entry name" value="ATP-DEPENDENT DNA HELICASE HOMOLOG RECG, CHLOROPLASTIC"/>
    <property type="match status" value="1"/>
</dbReference>
<dbReference type="Pfam" id="PF00270">
    <property type="entry name" value="DEAD"/>
    <property type="match status" value="1"/>
</dbReference>
<dbReference type="Pfam" id="PF00271">
    <property type="entry name" value="Helicase_C"/>
    <property type="match status" value="1"/>
</dbReference>
<dbReference type="Pfam" id="PF19833">
    <property type="entry name" value="RecG_dom3_C"/>
    <property type="match status" value="1"/>
</dbReference>
<dbReference type="Pfam" id="PF17191">
    <property type="entry name" value="RecG_wedge"/>
    <property type="match status" value="1"/>
</dbReference>
<dbReference type="SMART" id="SM00487">
    <property type="entry name" value="DEXDc"/>
    <property type="match status" value="1"/>
</dbReference>
<dbReference type="SMART" id="SM00490">
    <property type="entry name" value="HELICc"/>
    <property type="match status" value="1"/>
</dbReference>
<dbReference type="SUPFAM" id="SSF50249">
    <property type="entry name" value="Nucleic acid-binding proteins"/>
    <property type="match status" value="1"/>
</dbReference>
<dbReference type="SUPFAM" id="SSF52540">
    <property type="entry name" value="P-loop containing nucleoside triphosphate hydrolases"/>
    <property type="match status" value="2"/>
</dbReference>
<dbReference type="PROSITE" id="PS51192">
    <property type="entry name" value="HELICASE_ATP_BIND_1"/>
    <property type="match status" value="1"/>
</dbReference>
<dbReference type="PROSITE" id="PS51194">
    <property type="entry name" value="HELICASE_CTER"/>
    <property type="match status" value="1"/>
</dbReference>
<reference key="1">
    <citation type="journal article" date="2003" name="Mol. Microbiol.">
        <title>Genome-based analysis of virulence genes in a non-biofilm-forming Staphylococcus epidermidis strain (ATCC 12228).</title>
        <authorList>
            <person name="Zhang Y.-Q."/>
            <person name="Ren S.-X."/>
            <person name="Li H.-L."/>
            <person name="Wang Y.-X."/>
            <person name="Fu G."/>
            <person name="Yang J."/>
            <person name="Qin Z.-Q."/>
            <person name="Miao Y.-G."/>
            <person name="Wang W.-Y."/>
            <person name="Chen R.-S."/>
            <person name="Shen Y."/>
            <person name="Chen Z."/>
            <person name="Yuan Z.-H."/>
            <person name="Zhao G.-P."/>
            <person name="Qu D."/>
            <person name="Danchin A."/>
            <person name="Wen Y.-M."/>
        </authorList>
    </citation>
    <scope>NUCLEOTIDE SEQUENCE [LARGE SCALE GENOMIC DNA]</scope>
    <source>
        <strain>ATCC 12228 / FDA PCI 1200</strain>
    </source>
</reference>